<comment type="function">
    <text evidence="1">This protein binds to the 23S rRNA, and is important in its secondary structure. It is located near the subunit interface in the base of the L7/L12 stalk, and near the tRNA binding site of the peptidyltransferase center.</text>
</comment>
<comment type="subunit">
    <text evidence="1">Part of the 50S ribosomal subunit.</text>
</comment>
<comment type="similarity">
    <text evidence="1">Belongs to the universal ribosomal protein uL6 family.</text>
</comment>
<gene>
    <name evidence="1" type="primary">rplF</name>
    <name type="ordered locus">JJD26997_2066</name>
</gene>
<feature type="chain" id="PRO_1000055215" description="Large ribosomal subunit protein uL6">
    <location>
        <begin position="1"/>
        <end position="178"/>
    </location>
</feature>
<protein>
    <recommendedName>
        <fullName evidence="1">Large ribosomal subunit protein uL6</fullName>
    </recommendedName>
    <alternativeName>
        <fullName evidence="2">50S ribosomal protein L6</fullName>
    </alternativeName>
</protein>
<keyword id="KW-0687">Ribonucleoprotein</keyword>
<keyword id="KW-0689">Ribosomal protein</keyword>
<keyword id="KW-0694">RNA-binding</keyword>
<keyword id="KW-0699">rRNA-binding</keyword>
<name>RL6_CAMJD</name>
<accession>A7H641</accession>
<sequence>MSRIGKQPIAIPAGVEVKLEGNLLKFKKGNLAKELDTKANVNVEIKDNNILFSPKGEDRQSRAYWGTYRALAYNIVVGLTQGFSKTLEINGVGYKAALKGKVLELSLGFSHPINYDIPGGIEIVVDKNTIAVKGSDKQVVGQVAAQIREFRPPEPYKGKGVKYSDERIIRKAGKTSKK</sequence>
<organism>
    <name type="scientific">Campylobacter jejuni subsp. doylei (strain ATCC BAA-1458 / RM4099 / 269.97)</name>
    <dbReference type="NCBI Taxonomy" id="360109"/>
    <lineage>
        <taxon>Bacteria</taxon>
        <taxon>Pseudomonadati</taxon>
        <taxon>Campylobacterota</taxon>
        <taxon>Epsilonproteobacteria</taxon>
        <taxon>Campylobacterales</taxon>
        <taxon>Campylobacteraceae</taxon>
        <taxon>Campylobacter</taxon>
    </lineage>
</organism>
<reference key="1">
    <citation type="submission" date="2007-07" db="EMBL/GenBank/DDBJ databases">
        <title>Complete genome sequence of Campylobacter jejuni subsp doylei 269.97 isolated from human blood.</title>
        <authorList>
            <person name="Fouts D.E."/>
            <person name="Mongodin E.F."/>
            <person name="Puiu D."/>
            <person name="Sebastian Y."/>
            <person name="Miller W.G."/>
            <person name="Mandrell R.E."/>
            <person name="Lastovica A.J."/>
            <person name="Nelson K.E."/>
        </authorList>
    </citation>
    <scope>NUCLEOTIDE SEQUENCE [LARGE SCALE GENOMIC DNA]</scope>
    <source>
        <strain>ATCC BAA-1458 / RM4099 / 269.97</strain>
    </source>
</reference>
<dbReference type="EMBL" id="CP000768">
    <property type="protein sequence ID" value="ABS43555.1"/>
    <property type="molecule type" value="Genomic_DNA"/>
</dbReference>
<dbReference type="SMR" id="A7H641"/>
<dbReference type="KEGG" id="cjd:JJD26997_2066"/>
<dbReference type="HOGENOM" id="CLU_065464_1_2_7"/>
<dbReference type="Proteomes" id="UP000002302">
    <property type="component" value="Chromosome"/>
</dbReference>
<dbReference type="GO" id="GO:0022625">
    <property type="term" value="C:cytosolic large ribosomal subunit"/>
    <property type="evidence" value="ECO:0007669"/>
    <property type="project" value="TreeGrafter"/>
</dbReference>
<dbReference type="GO" id="GO:0019843">
    <property type="term" value="F:rRNA binding"/>
    <property type="evidence" value="ECO:0007669"/>
    <property type="project" value="UniProtKB-UniRule"/>
</dbReference>
<dbReference type="GO" id="GO:0003735">
    <property type="term" value="F:structural constituent of ribosome"/>
    <property type="evidence" value="ECO:0007669"/>
    <property type="project" value="InterPro"/>
</dbReference>
<dbReference type="GO" id="GO:0002181">
    <property type="term" value="P:cytoplasmic translation"/>
    <property type="evidence" value="ECO:0007669"/>
    <property type="project" value="TreeGrafter"/>
</dbReference>
<dbReference type="FunFam" id="3.90.930.12:FF:000001">
    <property type="entry name" value="50S ribosomal protein L6"/>
    <property type="match status" value="1"/>
</dbReference>
<dbReference type="Gene3D" id="3.90.930.12">
    <property type="entry name" value="Ribosomal protein L6, alpha-beta domain"/>
    <property type="match status" value="2"/>
</dbReference>
<dbReference type="HAMAP" id="MF_01365_B">
    <property type="entry name" value="Ribosomal_uL6_B"/>
    <property type="match status" value="1"/>
</dbReference>
<dbReference type="InterPro" id="IPR000702">
    <property type="entry name" value="Ribosomal_uL6-like"/>
</dbReference>
<dbReference type="InterPro" id="IPR036789">
    <property type="entry name" value="Ribosomal_uL6-like_a/b-dom_sf"/>
</dbReference>
<dbReference type="InterPro" id="IPR020040">
    <property type="entry name" value="Ribosomal_uL6_a/b-dom"/>
</dbReference>
<dbReference type="InterPro" id="IPR019906">
    <property type="entry name" value="Ribosomal_uL6_bac-type"/>
</dbReference>
<dbReference type="InterPro" id="IPR002358">
    <property type="entry name" value="Ribosomal_uL6_CS"/>
</dbReference>
<dbReference type="NCBIfam" id="TIGR03654">
    <property type="entry name" value="L6_bact"/>
    <property type="match status" value="1"/>
</dbReference>
<dbReference type="PANTHER" id="PTHR11655">
    <property type="entry name" value="60S/50S RIBOSOMAL PROTEIN L6/L9"/>
    <property type="match status" value="1"/>
</dbReference>
<dbReference type="PANTHER" id="PTHR11655:SF14">
    <property type="entry name" value="LARGE RIBOSOMAL SUBUNIT PROTEIN UL6M"/>
    <property type="match status" value="1"/>
</dbReference>
<dbReference type="Pfam" id="PF00347">
    <property type="entry name" value="Ribosomal_L6"/>
    <property type="match status" value="2"/>
</dbReference>
<dbReference type="PIRSF" id="PIRSF002162">
    <property type="entry name" value="Ribosomal_L6"/>
    <property type="match status" value="1"/>
</dbReference>
<dbReference type="PRINTS" id="PR00059">
    <property type="entry name" value="RIBOSOMALL6"/>
</dbReference>
<dbReference type="SUPFAM" id="SSF56053">
    <property type="entry name" value="Ribosomal protein L6"/>
    <property type="match status" value="2"/>
</dbReference>
<dbReference type="PROSITE" id="PS00525">
    <property type="entry name" value="RIBOSOMAL_L6_1"/>
    <property type="match status" value="1"/>
</dbReference>
<proteinExistence type="inferred from homology"/>
<evidence type="ECO:0000255" key="1">
    <source>
        <dbReference type="HAMAP-Rule" id="MF_01365"/>
    </source>
</evidence>
<evidence type="ECO:0000305" key="2"/>